<accession>A6MM55</accession>
<comment type="function">
    <text evidence="1">Component of the cytochrome b6-f complex, which mediates electron transfer between photosystem II (PSII) and photosystem I (PSI), cyclic electron flow around PSI, and state transitions. PetG is required for either the stability or assembly of the cytochrome b6-f complex.</text>
</comment>
<comment type="subunit">
    <text evidence="1">The 4 large subunits of the cytochrome b6-f complex are cytochrome b6, subunit IV (17 kDa polypeptide, PetD), cytochrome f and the Rieske protein, while the 4 small subunits are PetG, PetL, PetM and PetN. The complex functions as a dimer.</text>
</comment>
<comment type="subcellular location">
    <subcellularLocation>
        <location evidence="1">Plastid</location>
        <location evidence="1">Chloroplast thylakoid membrane</location>
        <topology evidence="1">Single-pass membrane protein</topology>
    </subcellularLocation>
</comment>
<comment type="similarity">
    <text evidence="1">Belongs to the PetG family.</text>
</comment>
<gene>
    <name evidence="1" type="primary">petG</name>
</gene>
<protein>
    <recommendedName>
        <fullName evidence="1">Cytochrome b6-f complex subunit 5</fullName>
    </recommendedName>
    <alternativeName>
        <fullName evidence="1">Cytochrome b6-f complex subunit PetG</fullName>
    </alternativeName>
    <alternativeName>
        <fullName evidence="1">Cytochrome b6-f complex subunit V</fullName>
    </alternativeName>
</protein>
<feature type="chain" id="PRO_0000355372" description="Cytochrome b6-f complex subunit 5">
    <location>
        <begin position="1"/>
        <end position="37"/>
    </location>
</feature>
<feature type="transmembrane region" description="Helical" evidence="1">
    <location>
        <begin position="5"/>
        <end position="25"/>
    </location>
</feature>
<evidence type="ECO:0000255" key="1">
    <source>
        <dbReference type="HAMAP-Rule" id="MF_00432"/>
    </source>
</evidence>
<reference key="1">
    <citation type="journal article" date="2007" name="Mol. Phylogenet. Evol.">
        <title>Phylogenetic and evolutionary implications of complete chloroplast genome sequences of four early-diverging angiosperms: Buxus (Buxaceae), Chloranthus (Chloranthaceae), Dioscorea (Dioscoreaceae), and Illicium (Schisandraceae).</title>
        <authorList>
            <person name="Hansen D.R."/>
            <person name="Dastidar S.G."/>
            <person name="Cai Z."/>
            <person name="Penaflor C."/>
            <person name="Kuehl J.V."/>
            <person name="Boore J.L."/>
            <person name="Jansen R.K."/>
        </authorList>
    </citation>
    <scope>NUCLEOTIDE SEQUENCE [LARGE SCALE GENOMIC DNA]</scope>
</reference>
<name>PETG_BUXMI</name>
<sequence length="37" mass="4170">MIEVFLFGIVLGLIPITLAGLFVTAYLQYRRGDQLDL</sequence>
<organism>
    <name type="scientific">Buxus microphylla</name>
    <name type="common">Littleleaf boxwood</name>
    <name type="synonym">Japanese boxwood</name>
    <dbReference type="NCBI Taxonomy" id="153571"/>
    <lineage>
        <taxon>Eukaryota</taxon>
        <taxon>Viridiplantae</taxon>
        <taxon>Streptophyta</taxon>
        <taxon>Embryophyta</taxon>
        <taxon>Tracheophyta</taxon>
        <taxon>Spermatophyta</taxon>
        <taxon>Magnoliopsida</taxon>
        <taxon>Buxales</taxon>
        <taxon>Buxaceae</taxon>
        <taxon>Buxus</taxon>
    </lineage>
</organism>
<proteinExistence type="inferred from homology"/>
<geneLocation type="chloroplast"/>
<keyword id="KW-0150">Chloroplast</keyword>
<keyword id="KW-0249">Electron transport</keyword>
<keyword id="KW-0472">Membrane</keyword>
<keyword id="KW-0602">Photosynthesis</keyword>
<keyword id="KW-0934">Plastid</keyword>
<keyword id="KW-0793">Thylakoid</keyword>
<keyword id="KW-0812">Transmembrane</keyword>
<keyword id="KW-1133">Transmembrane helix</keyword>
<keyword id="KW-0813">Transport</keyword>
<dbReference type="EMBL" id="EF380351">
    <property type="protein sequence ID" value="ABQ45268.1"/>
    <property type="molecule type" value="Genomic_DNA"/>
</dbReference>
<dbReference type="RefSeq" id="YP_001294203.1">
    <property type="nucleotide sequence ID" value="NC_009599.1"/>
</dbReference>
<dbReference type="SMR" id="A6MM55"/>
<dbReference type="GeneID" id="5236856"/>
<dbReference type="GO" id="GO:0009535">
    <property type="term" value="C:chloroplast thylakoid membrane"/>
    <property type="evidence" value="ECO:0007669"/>
    <property type="project" value="UniProtKB-SubCell"/>
</dbReference>
<dbReference type="GO" id="GO:0009512">
    <property type="term" value="C:cytochrome b6f complex"/>
    <property type="evidence" value="ECO:0007669"/>
    <property type="project" value="InterPro"/>
</dbReference>
<dbReference type="GO" id="GO:0045158">
    <property type="term" value="F:electron transporter, transferring electrons within cytochrome b6/f complex of photosystem II activity"/>
    <property type="evidence" value="ECO:0007669"/>
    <property type="project" value="UniProtKB-UniRule"/>
</dbReference>
<dbReference type="GO" id="GO:0017004">
    <property type="term" value="P:cytochrome complex assembly"/>
    <property type="evidence" value="ECO:0007669"/>
    <property type="project" value="UniProtKB-UniRule"/>
</dbReference>
<dbReference type="GO" id="GO:0015979">
    <property type="term" value="P:photosynthesis"/>
    <property type="evidence" value="ECO:0007669"/>
    <property type="project" value="UniProtKB-KW"/>
</dbReference>
<dbReference type="HAMAP" id="MF_00432">
    <property type="entry name" value="Cytb6_f_PetG"/>
    <property type="match status" value="1"/>
</dbReference>
<dbReference type="InterPro" id="IPR003683">
    <property type="entry name" value="Cyt_6/f_cplx_su5"/>
</dbReference>
<dbReference type="InterPro" id="IPR036099">
    <property type="entry name" value="Cyt_6/f_cplx_su5_sf"/>
</dbReference>
<dbReference type="NCBIfam" id="NF001907">
    <property type="entry name" value="PRK00665.1"/>
    <property type="match status" value="1"/>
</dbReference>
<dbReference type="Pfam" id="PF02529">
    <property type="entry name" value="PetG"/>
    <property type="match status" value="1"/>
</dbReference>
<dbReference type="PIRSF" id="PIRSF000034">
    <property type="entry name" value="Cyt_b6-f_V"/>
    <property type="match status" value="1"/>
</dbReference>
<dbReference type="SUPFAM" id="SSF103446">
    <property type="entry name" value="PetG subunit of the cytochrome b6f complex"/>
    <property type="match status" value="1"/>
</dbReference>